<keyword id="KW-0002">3D-structure</keyword>
<keyword id="KW-0276">Fatty acid metabolism</keyword>
<keyword id="KW-0443">Lipid metabolism</keyword>
<keyword id="KW-0456">Lyase</keyword>
<keyword id="KW-1185">Reference proteome</keyword>
<protein>
    <recommendedName>
        <fullName evidence="3">Putative enoyl-CoA hydratase</fullName>
        <ecNumber evidence="1">4.2.1.17</ecNumber>
    </recommendedName>
    <alternativeName>
        <fullName evidence="3">TtECH</fullName>
    </alternativeName>
</protein>
<evidence type="ECO:0000250" key="1">
    <source>
        <dbReference type="UniProtKB" id="P14604"/>
    </source>
</evidence>
<evidence type="ECO:0000269" key="2">
    <source>
    </source>
</evidence>
<evidence type="ECO:0000303" key="3">
    <source>
    </source>
</evidence>
<evidence type="ECO:0000305" key="4"/>
<evidence type="ECO:0000305" key="5">
    <source>
    </source>
</evidence>
<evidence type="ECO:0000312" key="6">
    <source>
        <dbReference type="EMBL" id="BAD70373.1"/>
    </source>
</evidence>
<evidence type="ECO:0007744" key="7">
    <source>
        <dbReference type="PDB" id="1UIY"/>
    </source>
</evidence>
<evidence type="ECO:0007829" key="8">
    <source>
        <dbReference type="PDB" id="1UIY"/>
    </source>
</evidence>
<proteinExistence type="evidence at protein level"/>
<sequence>MVQVEKGHVAVVFLNDPERRNPLSPEMALSLLQALDDLEADPGVRAVVLTGRGKAFSAGADLAFLERVTELGAEENYRHSLSLMRLFHRVYTYPKPTVAAVNGPAVAGGAGLALACDLVVMDEEARLGYTEVKIGFVAALVSVILVRAVGEKAAKDLLLTGRLVEAREAKALGLVNRIAPPGKALEEAKALAEEVAKNAPTSLRLTKELLLALPGMGLEDGFRLAALANAWVRETGDLKEGIRAFFEKRPPRF</sequence>
<gene>
    <name evidence="6" type="ordered locus">TTHA0550</name>
</gene>
<comment type="catalytic activity">
    <reaction evidence="1">
        <text>a (3S)-3-hydroxyacyl-CoA = a (2E)-enoyl-CoA + H2O</text>
        <dbReference type="Rhea" id="RHEA:16105"/>
        <dbReference type="ChEBI" id="CHEBI:15377"/>
        <dbReference type="ChEBI" id="CHEBI:57318"/>
        <dbReference type="ChEBI" id="CHEBI:58856"/>
        <dbReference type="EC" id="4.2.1.17"/>
    </reaction>
</comment>
<comment type="subunit">
    <text evidence="2">Homohexamer; dimer of trimers.</text>
</comment>
<comment type="similarity">
    <text evidence="4">Belongs to the enoyl-CoA hydratase/isomerase family.</text>
</comment>
<feature type="chain" id="PRO_0000458672" description="Putative enoyl-CoA hydratase">
    <location>
        <begin position="1"/>
        <end position="253"/>
    </location>
</feature>
<feature type="active site" evidence="5">
    <location>
        <position position="131"/>
    </location>
</feature>
<feature type="strand" evidence="8">
    <location>
        <begin position="2"/>
        <end position="5"/>
    </location>
</feature>
<feature type="strand" evidence="8">
    <location>
        <begin position="7"/>
        <end position="14"/>
    </location>
</feature>
<feature type="turn" evidence="8">
    <location>
        <begin position="17"/>
        <end position="20"/>
    </location>
</feature>
<feature type="helix" evidence="8">
    <location>
        <begin position="25"/>
        <end position="40"/>
    </location>
</feature>
<feature type="strand" evidence="8">
    <location>
        <begin position="46"/>
        <end position="54"/>
    </location>
</feature>
<feature type="helix" evidence="8">
    <location>
        <begin position="62"/>
        <end position="68"/>
    </location>
</feature>
<feature type="helix" evidence="8">
    <location>
        <begin position="73"/>
        <end position="92"/>
    </location>
</feature>
<feature type="strand" evidence="8">
    <location>
        <begin position="97"/>
        <end position="101"/>
    </location>
</feature>
<feature type="helix" evidence="8">
    <location>
        <begin position="108"/>
        <end position="114"/>
    </location>
</feature>
<feature type="strand" evidence="8">
    <location>
        <begin position="116"/>
        <end position="122"/>
    </location>
</feature>
<feature type="strand" evidence="8">
    <location>
        <begin position="126"/>
        <end position="128"/>
    </location>
</feature>
<feature type="helix" evidence="8">
    <location>
        <begin position="131"/>
        <end position="133"/>
    </location>
</feature>
<feature type="helix" evidence="8">
    <location>
        <begin position="139"/>
        <end position="148"/>
    </location>
</feature>
<feature type="helix" evidence="8">
    <location>
        <begin position="151"/>
        <end position="160"/>
    </location>
</feature>
<feature type="strand" evidence="8">
    <location>
        <begin position="163"/>
        <end position="165"/>
    </location>
</feature>
<feature type="helix" evidence="8">
    <location>
        <begin position="166"/>
        <end position="171"/>
    </location>
</feature>
<feature type="strand" evidence="8">
    <location>
        <begin position="176"/>
        <end position="179"/>
    </location>
</feature>
<feature type="helix" evidence="8">
    <location>
        <begin position="184"/>
        <end position="197"/>
    </location>
</feature>
<feature type="helix" evidence="8">
    <location>
        <begin position="200"/>
        <end position="212"/>
    </location>
</feature>
<feature type="helix" evidence="8">
    <location>
        <begin position="213"/>
        <end position="215"/>
    </location>
</feature>
<feature type="helix" evidence="8">
    <location>
        <begin position="218"/>
        <end position="231"/>
    </location>
</feature>
<feature type="helix" evidence="8">
    <location>
        <begin position="232"/>
        <end position="234"/>
    </location>
</feature>
<feature type="helix" evidence="8">
    <location>
        <begin position="236"/>
        <end position="246"/>
    </location>
</feature>
<reference key="1">
    <citation type="submission" date="2004-11" db="EMBL/GenBank/DDBJ databases">
        <title>Complete genome sequence of Thermus thermophilus HB8.</title>
        <authorList>
            <person name="Masui R."/>
            <person name="Kurokawa K."/>
            <person name="Nakagawa N."/>
            <person name="Tokunaga F."/>
            <person name="Koyama Y."/>
            <person name="Shibata T."/>
            <person name="Oshima T."/>
            <person name="Yokoyama S."/>
            <person name="Yasunaga T."/>
            <person name="Kuramitsu S."/>
        </authorList>
    </citation>
    <scope>NUCLEOTIDE SEQUENCE [LARGE SCALE GENOMIC DNA]</scope>
    <source>
        <strain>ATCC 27634 / DSM 579 / HB8</strain>
    </source>
</reference>
<reference evidence="7" key="2">
    <citation type="journal article" date="2021" name="Acta Crystallogr. F Struct. Biol. Commun.">
        <title>Crystal structure of enoyl-CoA hydratase from Thermus thermophilus HB8.</title>
        <authorList>
            <person name="Padavattan S."/>
            <person name="Jos S."/>
            <person name="Gogoi H."/>
            <person name="Bagautdinov B."/>
        </authorList>
    </citation>
    <scope>X-RAY CRYSTALLOGRAPHY (2.85 ANGSTROMS)</scope>
    <scope>SUBUNIT</scope>
    <scope>ACTIVE SITE</scope>
    <source>
        <strain>ATCC 27634 / DSM 579 / HB8</strain>
    </source>
</reference>
<dbReference type="EC" id="4.2.1.17" evidence="1"/>
<dbReference type="EMBL" id="AP008226">
    <property type="protein sequence ID" value="BAD70373.1"/>
    <property type="molecule type" value="Genomic_DNA"/>
</dbReference>
<dbReference type="RefSeq" id="WP_011228020.1">
    <property type="nucleotide sequence ID" value="NC_006461.1"/>
</dbReference>
<dbReference type="RefSeq" id="YP_143816.1">
    <property type="nucleotide sequence ID" value="NC_006461.1"/>
</dbReference>
<dbReference type="PDB" id="1UIY">
    <property type="method" value="X-ray"/>
    <property type="resolution" value="2.85 A"/>
    <property type="chains" value="A=1-253"/>
</dbReference>
<dbReference type="PDBsum" id="1UIY"/>
<dbReference type="SMR" id="Q5SKU3"/>
<dbReference type="EnsemblBacteria" id="BAD70373">
    <property type="protein sequence ID" value="BAD70373"/>
    <property type="gene ID" value="BAD70373"/>
</dbReference>
<dbReference type="GeneID" id="3169143"/>
<dbReference type="KEGG" id="ttj:TTHA0550"/>
<dbReference type="PATRIC" id="fig|300852.9.peg.549"/>
<dbReference type="eggNOG" id="COG1024">
    <property type="taxonomic scope" value="Bacteria"/>
</dbReference>
<dbReference type="HOGENOM" id="CLU_009834_7_3_0"/>
<dbReference type="PhylomeDB" id="Q5SKU3"/>
<dbReference type="EvolutionaryTrace" id="Q5SKU3"/>
<dbReference type="Proteomes" id="UP000000532">
    <property type="component" value="Chromosome"/>
</dbReference>
<dbReference type="GO" id="GO:0016829">
    <property type="term" value="F:lyase activity"/>
    <property type="evidence" value="ECO:0007669"/>
    <property type="project" value="UniProtKB-KW"/>
</dbReference>
<dbReference type="GO" id="GO:0006631">
    <property type="term" value="P:fatty acid metabolic process"/>
    <property type="evidence" value="ECO:0007669"/>
    <property type="project" value="UniProtKB-KW"/>
</dbReference>
<dbReference type="CDD" id="cd06558">
    <property type="entry name" value="crotonase-like"/>
    <property type="match status" value="1"/>
</dbReference>
<dbReference type="Gene3D" id="3.90.226.10">
    <property type="entry name" value="2-enoyl-CoA Hydratase, Chain A, domain 1"/>
    <property type="match status" value="1"/>
</dbReference>
<dbReference type="Gene3D" id="1.10.12.10">
    <property type="entry name" value="Lyase 2-enoyl-coa Hydratase, Chain A, domain 2"/>
    <property type="match status" value="1"/>
</dbReference>
<dbReference type="InterPro" id="IPR029045">
    <property type="entry name" value="ClpP/crotonase-like_dom_sf"/>
</dbReference>
<dbReference type="InterPro" id="IPR018376">
    <property type="entry name" value="Enoyl-CoA_hyd/isom_CS"/>
</dbReference>
<dbReference type="InterPro" id="IPR001753">
    <property type="entry name" value="Enoyl-CoA_hydra/iso"/>
</dbReference>
<dbReference type="InterPro" id="IPR014748">
    <property type="entry name" value="Enoyl-CoA_hydra_C"/>
</dbReference>
<dbReference type="InterPro" id="IPR051683">
    <property type="entry name" value="Enoyl-CoA_Hydratase/Isomerase"/>
</dbReference>
<dbReference type="PANTHER" id="PTHR42964">
    <property type="entry name" value="ENOYL-COA HYDRATASE"/>
    <property type="match status" value="1"/>
</dbReference>
<dbReference type="PANTHER" id="PTHR42964:SF1">
    <property type="entry name" value="POLYKETIDE BIOSYNTHESIS ENOYL-COA HYDRATASE PKSH-RELATED"/>
    <property type="match status" value="1"/>
</dbReference>
<dbReference type="Pfam" id="PF00378">
    <property type="entry name" value="ECH_1"/>
    <property type="match status" value="1"/>
</dbReference>
<dbReference type="SUPFAM" id="SSF52096">
    <property type="entry name" value="ClpP/crotonase"/>
    <property type="match status" value="1"/>
</dbReference>
<dbReference type="PROSITE" id="PS00166">
    <property type="entry name" value="ENOYL_COA_HYDRATASE"/>
    <property type="match status" value="1"/>
</dbReference>
<name>ECH_THET8</name>
<organism>
    <name type="scientific">Thermus thermophilus (strain ATCC 27634 / DSM 579 / HB8)</name>
    <dbReference type="NCBI Taxonomy" id="300852"/>
    <lineage>
        <taxon>Bacteria</taxon>
        <taxon>Thermotogati</taxon>
        <taxon>Deinococcota</taxon>
        <taxon>Deinococci</taxon>
        <taxon>Thermales</taxon>
        <taxon>Thermaceae</taxon>
        <taxon>Thermus</taxon>
    </lineage>
</organism>
<accession>Q5SKU3</accession>
<accession>P83702</accession>